<feature type="chain" id="PRO_1000196940" description="tRNA sulfurtransferase">
    <location>
        <begin position="1"/>
        <end position="482"/>
    </location>
</feature>
<feature type="domain" description="THUMP" evidence="1">
    <location>
        <begin position="58"/>
        <end position="160"/>
    </location>
</feature>
<feature type="domain" description="Rhodanese" evidence="1">
    <location>
        <begin position="400"/>
        <end position="482"/>
    </location>
</feature>
<feature type="active site" description="Cysteine persulfide intermediate" evidence="1">
    <location>
        <position position="444"/>
    </location>
</feature>
<feature type="binding site" evidence="1">
    <location>
        <begin position="178"/>
        <end position="179"/>
    </location>
    <ligand>
        <name>ATP</name>
        <dbReference type="ChEBI" id="CHEBI:30616"/>
    </ligand>
</feature>
<feature type="binding site" evidence="1">
    <location>
        <begin position="203"/>
        <end position="204"/>
    </location>
    <ligand>
        <name>ATP</name>
        <dbReference type="ChEBI" id="CHEBI:30616"/>
    </ligand>
</feature>
<feature type="binding site" evidence="1">
    <location>
        <position position="260"/>
    </location>
    <ligand>
        <name>ATP</name>
        <dbReference type="ChEBI" id="CHEBI:30616"/>
    </ligand>
</feature>
<feature type="binding site" evidence="1">
    <location>
        <position position="282"/>
    </location>
    <ligand>
        <name>ATP</name>
        <dbReference type="ChEBI" id="CHEBI:30616"/>
    </ligand>
</feature>
<feature type="binding site" evidence="1">
    <location>
        <position position="291"/>
    </location>
    <ligand>
        <name>ATP</name>
        <dbReference type="ChEBI" id="CHEBI:30616"/>
    </ligand>
</feature>
<feature type="disulfide bond" description="Redox-active" evidence="1">
    <location>
        <begin position="341"/>
        <end position="444"/>
    </location>
</feature>
<reference key="1">
    <citation type="journal article" date="2009" name="J. Bacteriol.">
        <title>Complete genome sequence of the anaerobic, protein-degrading hyperthermophilic crenarchaeon Desulfurococcus kamchatkensis.</title>
        <authorList>
            <person name="Ravin N.V."/>
            <person name="Mardanov A.V."/>
            <person name="Beletsky A.V."/>
            <person name="Kublanov I.V."/>
            <person name="Kolganova T.V."/>
            <person name="Lebedinsky A.V."/>
            <person name="Chernyh N.A."/>
            <person name="Bonch-Osmolovskaya E.A."/>
            <person name="Skryabin K.G."/>
        </authorList>
    </citation>
    <scope>NUCLEOTIDE SEQUENCE [LARGE SCALE GENOMIC DNA]</scope>
    <source>
        <strain>DSM 18924 / JCM 16383 / VKM B-2413 / 1221n</strain>
    </source>
</reference>
<name>THII_DESA1</name>
<proteinExistence type="inferred from homology"/>
<accession>B8D4I6</accession>
<comment type="function">
    <text evidence="1">Catalyzes the ATP-dependent transfer of a sulfur to tRNA to produce 4-thiouridine in position 8 of tRNAs, which functions as a near-UV photosensor. Also catalyzes the transfer of sulfur to the sulfur carrier protein ThiS, forming ThiS-thiocarboxylate. This is a step in the synthesis of thiazole, in the thiamine biosynthesis pathway. The sulfur is donated as persulfide by IscS.</text>
</comment>
<comment type="catalytic activity">
    <reaction evidence="1">
        <text>[ThiI sulfur-carrier protein]-S-sulfanyl-L-cysteine + a uridine in tRNA + 2 reduced [2Fe-2S]-[ferredoxin] + ATP + H(+) = [ThiI sulfur-carrier protein]-L-cysteine + a 4-thiouridine in tRNA + 2 oxidized [2Fe-2S]-[ferredoxin] + AMP + diphosphate</text>
        <dbReference type="Rhea" id="RHEA:24176"/>
        <dbReference type="Rhea" id="RHEA-COMP:10000"/>
        <dbReference type="Rhea" id="RHEA-COMP:10001"/>
        <dbReference type="Rhea" id="RHEA-COMP:13337"/>
        <dbReference type="Rhea" id="RHEA-COMP:13338"/>
        <dbReference type="Rhea" id="RHEA-COMP:13339"/>
        <dbReference type="Rhea" id="RHEA-COMP:13340"/>
        <dbReference type="ChEBI" id="CHEBI:15378"/>
        <dbReference type="ChEBI" id="CHEBI:29950"/>
        <dbReference type="ChEBI" id="CHEBI:30616"/>
        <dbReference type="ChEBI" id="CHEBI:33019"/>
        <dbReference type="ChEBI" id="CHEBI:33737"/>
        <dbReference type="ChEBI" id="CHEBI:33738"/>
        <dbReference type="ChEBI" id="CHEBI:61963"/>
        <dbReference type="ChEBI" id="CHEBI:65315"/>
        <dbReference type="ChEBI" id="CHEBI:136798"/>
        <dbReference type="ChEBI" id="CHEBI:456215"/>
        <dbReference type="EC" id="2.8.1.4"/>
    </reaction>
</comment>
<comment type="catalytic activity">
    <reaction evidence="1">
        <text>[ThiS sulfur-carrier protein]-C-terminal Gly-Gly-AMP + S-sulfanyl-L-cysteinyl-[cysteine desulfurase] + AH2 = [ThiS sulfur-carrier protein]-C-terminal-Gly-aminoethanethioate + L-cysteinyl-[cysteine desulfurase] + A + AMP + 2 H(+)</text>
        <dbReference type="Rhea" id="RHEA:43340"/>
        <dbReference type="Rhea" id="RHEA-COMP:12157"/>
        <dbReference type="Rhea" id="RHEA-COMP:12158"/>
        <dbReference type="Rhea" id="RHEA-COMP:12910"/>
        <dbReference type="Rhea" id="RHEA-COMP:19908"/>
        <dbReference type="ChEBI" id="CHEBI:13193"/>
        <dbReference type="ChEBI" id="CHEBI:15378"/>
        <dbReference type="ChEBI" id="CHEBI:17499"/>
        <dbReference type="ChEBI" id="CHEBI:29950"/>
        <dbReference type="ChEBI" id="CHEBI:61963"/>
        <dbReference type="ChEBI" id="CHEBI:90618"/>
        <dbReference type="ChEBI" id="CHEBI:232372"/>
        <dbReference type="ChEBI" id="CHEBI:456215"/>
    </reaction>
</comment>
<comment type="pathway">
    <text evidence="1">Cofactor biosynthesis; thiamine diphosphate biosynthesis.</text>
</comment>
<comment type="subcellular location">
    <subcellularLocation>
        <location evidence="1">Cytoplasm</location>
    </subcellularLocation>
</comment>
<comment type="similarity">
    <text evidence="1">Belongs to the ThiI family.</text>
</comment>
<keyword id="KW-0067">ATP-binding</keyword>
<keyword id="KW-0963">Cytoplasm</keyword>
<keyword id="KW-1015">Disulfide bond</keyword>
<keyword id="KW-0547">Nucleotide-binding</keyword>
<keyword id="KW-0676">Redox-active center</keyword>
<keyword id="KW-0694">RNA-binding</keyword>
<keyword id="KW-0784">Thiamine biosynthesis</keyword>
<keyword id="KW-0808">Transferase</keyword>
<keyword id="KW-0820">tRNA-binding</keyword>
<dbReference type="EC" id="2.8.1.4" evidence="1"/>
<dbReference type="EMBL" id="CP001140">
    <property type="protein sequence ID" value="ACL11017.1"/>
    <property type="molecule type" value="Genomic_DNA"/>
</dbReference>
<dbReference type="RefSeq" id="WP_012608358.1">
    <property type="nucleotide sequence ID" value="NC_011766.1"/>
</dbReference>
<dbReference type="SMR" id="B8D4I6"/>
<dbReference type="STRING" id="490899.DKAM_0691"/>
<dbReference type="GeneID" id="7170870"/>
<dbReference type="KEGG" id="dka:DKAM_0691"/>
<dbReference type="eggNOG" id="arCOG00038">
    <property type="taxonomic scope" value="Archaea"/>
</dbReference>
<dbReference type="eggNOG" id="arCOG02021">
    <property type="taxonomic scope" value="Archaea"/>
</dbReference>
<dbReference type="HOGENOM" id="CLU_037952_4_1_2"/>
<dbReference type="UniPathway" id="UPA00060"/>
<dbReference type="Proteomes" id="UP000006903">
    <property type="component" value="Chromosome"/>
</dbReference>
<dbReference type="GO" id="GO:0005829">
    <property type="term" value="C:cytosol"/>
    <property type="evidence" value="ECO:0007669"/>
    <property type="project" value="TreeGrafter"/>
</dbReference>
<dbReference type="GO" id="GO:0005524">
    <property type="term" value="F:ATP binding"/>
    <property type="evidence" value="ECO:0007669"/>
    <property type="project" value="UniProtKB-UniRule"/>
</dbReference>
<dbReference type="GO" id="GO:0004810">
    <property type="term" value="F:CCA tRNA nucleotidyltransferase activity"/>
    <property type="evidence" value="ECO:0007669"/>
    <property type="project" value="InterPro"/>
</dbReference>
<dbReference type="GO" id="GO:0000049">
    <property type="term" value="F:tRNA binding"/>
    <property type="evidence" value="ECO:0007669"/>
    <property type="project" value="UniProtKB-UniRule"/>
</dbReference>
<dbReference type="GO" id="GO:0140741">
    <property type="term" value="F:tRNA-uracil-4 sulfurtransferase activity"/>
    <property type="evidence" value="ECO:0007669"/>
    <property type="project" value="UniProtKB-EC"/>
</dbReference>
<dbReference type="GO" id="GO:0009228">
    <property type="term" value="P:thiamine biosynthetic process"/>
    <property type="evidence" value="ECO:0007669"/>
    <property type="project" value="UniProtKB-KW"/>
</dbReference>
<dbReference type="GO" id="GO:0009229">
    <property type="term" value="P:thiamine diphosphate biosynthetic process"/>
    <property type="evidence" value="ECO:0007669"/>
    <property type="project" value="UniProtKB-UniRule"/>
</dbReference>
<dbReference type="GO" id="GO:0052837">
    <property type="term" value="P:thiazole biosynthetic process"/>
    <property type="evidence" value="ECO:0007669"/>
    <property type="project" value="TreeGrafter"/>
</dbReference>
<dbReference type="GO" id="GO:0002937">
    <property type="term" value="P:tRNA 4-thiouridine biosynthesis"/>
    <property type="evidence" value="ECO:0007669"/>
    <property type="project" value="TreeGrafter"/>
</dbReference>
<dbReference type="CDD" id="cd01712">
    <property type="entry name" value="PPase_ThiI"/>
    <property type="match status" value="1"/>
</dbReference>
<dbReference type="CDD" id="cd00158">
    <property type="entry name" value="RHOD"/>
    <property type="match status" value="1"/>
</dbReference>
<dbReference type="CDD" id="cd11716">
    <property type="entry name" value="THUMP_ThiI"/>
    <property type="match status" value="1"/>
</dbReference>
<dbReference type="Gene3D" id="3.30.2130.30">
    <property type="match status" value="1"/>
</dbReference>
<dbReference type="Gene3D" id="3.40.50.620">
    <property type="entry name" value="HUPs"/>
    <property type="match status" value="1"/>
</dbReference>
<dbReference type="Gene3D" id="3.40.250.10">
    <property type="entry name" value="Rhodanese-like domain"/>
    <property type="match status" value="1"/>
</dbReference>
<dbReference type="HAMAP" id="MF_00021">
    <property type="entry name" value="ThiI"/>
    <property type="match status" value="1"/>
</dbReference>
<dbReference type="InterPro" id="IPR001763">
    <property type="entry name" value="Rhodanese-like_dom"/>
</dbReference>
<dbReference type="InterPro" id="IPR036873">
    <property type="entry name" value="Rhodanese-like_dom_sf"/>
</dbReference>
<dbReference type="InterPro" id="IPR014729">
    <property type="entry name" value="Rossmann-like_a/b/a_fold"/>
</dbReference>
<dbReference type="InterPro" id="IPR020536">
    <property type="entry name" value="ThiI_AANH"/>
</dbReference>
<dbReference type="InterPro" id="IPR054173">
    <property type="entry name" value="ThiI_fer"/>
</dbReference>
<dbReference type="InterPro" id="IPR049961">
    <property type="entry name" value="ThiI_N"/>
</dbReference>
<dbReference type="InterPro" id="IPR004114">
    <property type="entry name" value="THUMP_dom"/>
</dbReference>
<dbReference type="InterPro" id="IPR049962">
    <property type="entry name" value="THUMP_ThiI"/>
</dbReference>
<dbReference type="InterPro" id="IPR003720">
    <property type="entry name" value="tRNA_STrfase"/>
</dbReference>
<dbReference type="InterPro" id="IPR050102">
    <property type="entry name" value="tRNA_sulfurtransferase_ThiI"/>
</dbReference>
<dbReference type="NCBIfam" id="TIGR00342">
    <property type="entry name" value="tRNA uracil 4-sulfurtransferase ThiI"/>
    <property type="match status" value="1"/>
</dbReference>
<dbReference type="PANTHER" id="PTHR43209">
    <property type="entry name" value="TRNA SULFURTRANSFERASE"/>
    <property type="match status" value="1"/>
</dbReference>
<dbReference type="PANTHER" id="PTHR43209:SF1">
    <property type="entry name" value="TRNA SULFURTRANSFERASE"/>
    <property type="match status" value="1"/>
</dbReference>
<dbReference type="Pfam" id="PF00581">
    <property type="entry name" value="Rhodanese"/>
    <property type="match status" value="1"/>
</dbReference>
<dbReference type="Pfam" id="PF02568">
    <property type="entry name" value="ThiI"/>
    <property type="match status" value="1"/>
</dbReference>
<dbReference type="Pfam" id="PF22025">
    <property type="entry name" value="ThiI_fer"/>
    <property type="match status" value="1"/>
</dbReference>
<dbReference type="Pfam" id="PF02926">
    <property type="entry name" value="THUMP"/>
    <property type="match status" value="1"/>
</dbReference>
<dbReference type="SMART" id="SM00450">
    <property type="entry name" value="RHOD"/>
    <property type="match status" value="1"/>
</dbReference>
<dbReference type="SMART" id="SM00981">
    <property type="entry name" value="THUMP"/>
    <property type="match status" value="1"/>
</dbReference>
<dbReference type="SUPFAM" id="SSF52402">
    <property type="entry name" value="Adenine nucleotide alpha hydrolases-like"/>
    <property type="match status" value="1"/>
</dbReference>
<dbReference type="SUPFAM" id="SSF52821">
    <property type="entry name" value="Rhodanese/Cell cycle control phosphatase"/>
    <property type="match status" value="1"/>
</dbReference>
<dbReference type="SUPFAM" id="SSF143437">
    <property type="entry name" value="THUMP domain-like"/>
    <property type="match status" value="1"/>
</dbReference>
<dbReference type="PROSITE" id="PS50206">
    <property type="entry name" value="RHODANESE_3"/>
    <property type="match status" value="1"/>
</dbReference>
<dbReference type="PROSITE" id="PS51165">
    <property type="entry name" value="THUMP"/>
    <property type="match status" value="1"/>
</dbReference>
<sequence>MPTYLITVAGEIPLKSKKTRSRLYYRLIDNIRRRLARRNITLQVAKVIDAKILVETQVEALQELSRVFGVHRVSEVQVLEFRDLGELAKEIASRTIEHVRDRKFAVRVKRSGRHGFTSLDVAREVGALLKPYSKGVDLENPDIEVEVEVRGNKAYLYSNVAMGPGGLPLGSSGRALVLFSGGFDSPVAAWMIAKRGVEVDFLHYVMGSSEVSRQAFSVARKLSEEWLSSYNPRFITVDFTPLIAEIEERIEWSYRQVVLRALMYMVADKIATELGYNTIVTGEALSQASSQTLANLVAVESAVSPRSIILRPLIGFDKEEIIEYSRRIGLYDYSSRVAETCAIAPTHVVTRISSEKLKSLIERLDVRLVERMAGEYRVVDVFSASPEEAVPGYSEEIDSIPGDSIIIDVRSYEEYKRDALPGAIHLSMVDFNNLPRDKPVVLYCTTGGISLLLARELRGKGFKAYSLRGGLARYRAGLEKTR</sequence>
<organism>
    <name type="scientific">Desulfurococcus amylolyticus (strain DSM 18924 / JCM 16383 / VKM B-2413 / 1221n)</name>
    <name type="common">Desulfurococcus kamchatkensis</name>
    <dbReference type="NCBI Taxonomy" id="490899"/>
    <lineage>
        <taxon>Archaea</taxon>
        <taxon>Thermoproteota</taxon>
        <taxon>Thermoprotei</taxon>
        <taxon>Desulfurococcales</taxon>
        <taxon>Desulfurococcaceae</taxon>
        <taxon>Desulfurococcus</taxon>
    </lineage>
</organism>
<evidence type="ECO:0000255" key="1">
    <source>
        <dbReference type="HAMAP-Rule" id="MF_00021"/>
    </source>
</evidence>
<protein>
    <recommendedName>
        <fullName evidence="1">tRNA sulfurtransferase</fullName>
        <ecNumber evidence="1">2.8.1.4</ecNumber>
    </recommendedName>
    <alternativeName>
        <fullName evidence="1">Sulfur carrier protein ThiS sulfurtransferase</fullName>
    </alternativeName>
    <alternativeName>
        <fullName evidence="1">Thiamine biosynthesis protein ThiI</fullName>
    </alternativeName>
    <alternativeName>
        <fullName evidence="1">tRNA 4-thiouridine synthase</fullName>
    </alternativeName>
</protein>
<gene>
    <name evidence="1" type="primary">thiI</name>
    <name type="ordered locus">DKAM_0691</name>
</gene>